<keyword id="KW-0963">Cytoplasm</keyword>
<sequence length="325" mass="35737">MKNPKMTVIGGGTGISIILKSLRNEAVDITAVVTVADDGGSSGELRNAMQLAPPGDLRNVLLAMSDMPKFYERVFQYRFNESDGALAGHPLGNLIIAGISEMQGSTYNAIQILTKFFHITGKIYPSSEQALTLHAVFKDGHEVAGESSIAKYQGMIDHVYVTNTYNDQKPQASRKVVEAILESDMIVLGPGSLFTSILPNLVIPEIKEALRQTKAEVVYICNIMTQYGETEQFSDADHVAVLNQHLGRDLIDTVLVNVAKVPQAYMNSNKFDEYLVQVDHDFAGLCRAAKRVISSYFLRLENGGAFHDGNLVVEELMNLVRIVKQ</sequence>
<gene>
    <name type="ordered locus">spyM18_0714</name>
</gene>
<comment type="function">
    <text evidence="1">Required for morphogenesis under gluconeogenic growth conditions.</text>
</comment>
<comment type="subcellular location">
    <subcellularLocation>
        <location evidence="1">Cytoplasm</location>
    </subcellularLocation>
</comment>
<comment type="similarity">
    <text evidence="1">Belongs to the gluconeogenesis factor family.</text>
</comment>
<accession>Q8P1T7</accession>
<dbReference type="EMBL" id="AE009949">
    <property type="protein sequence ID" value="AAL97385.1"/>
    <property type="molecule type" value="Genomic_DNA"/>
</dbReference>
<dbReference type="RefSeq" id="WP_011017561.1">
    <property type="nucleotide sequence ID" value="NC_003485.1"/>
</dbReference>
<dbReference type="SMR" id="Q8P1T7"/>
<dbReference type="KEGG" id="spm:spyM18_0714"/>
<dbReference type="HOGENOM" id="CLU_044041_0_1_9"/>
<dbReference type="GO" id="GO:0005737">
    <property type="term" value="C:cytoplasm"/>
    <property type="evidence" value="ECO:0007669"/>
    <property type="project" value="UniProtKB-SubCell"/>
</dbReference>
<dbReference type="GO" id="GO:0043743">
    <property type="term" value="F:LPPG:FO 2-phospho-L-lactate transferase activity"/>
    <property type="evidence" value="ECO:0007669"/>
    <property type="project" value="InterPro"/>
</dbReference>
<dbReference type="GO" id="GO:0008360">
    <property type="term" value="P:regulation of cell shape"/>
    <property type="evidence" value="ECO:0007669"/>
    <property type="project" value="UniProtKB-UniRule"/>
</dbReference>
<dbReference type="CDD" id="cd07044">
    <property type="entry name" value="CofD_YvcK"/>
    <property type="match status" value="1"/>
</dbReference>
<dbReference type="Gene3D" id="3.40.50.10680">
    <property type="entry name" value="CofD-like domains"/>
    <property type="match status" value="1"/>
</dbReference>
<dbReference type="HAMAP" id="MF_00973">
    <property type="entry name" value="Gluconeogen_factor"/>
    <property type="match status" value="1"/>
</dbReference>
<dbReference type="InterPro" id="IPR002882">
    <property type="entry name" value="CofD"/>
</dbReference>
<dbReference type="InterPro" id="IPR038136">
    <property type="entry name" value="CofD-like_dom_sf"/>
</dbReference>
<dbReference type="InterPro" id="IPR010119">
    <property type="entry name" value="Gluconeogen_factor"/>
</dbReference>
<dbReference type="NCBIfam" id="TIGR01826">
    <property type="entry name" value="CofD_related"/>
    <property type="match status" value="1"/>
</dbReference>
<dbReference type="PANTHER" id="PTHR30135:SF3">
    <property type="entry name" value="GLUCONEOGENESIS FACTOR-RELATED"/>
    <property type="match status" value="1"/>
</dbReference>
<dbReference type="PANTHER" id="PTHR30135">
    <property type="entry name" value="UNCHARACTERIZED PROTEIN YVCK-RELATED"/>
    <property type="match status" value="1"/>
</dbReference>
<dbReference type="Pfam" id="PF01933">
    <property type="entry name" value="CofD"/>
    <property type="match status" value="1"/>
</dbReference>
<dbReference type="SUPFAM" id="SSF142338">
    <property type="entry name" value="CofD-like"/>
    <property type="match status" value="1"/>
</dbReference>
<name>GNGF_STRP8</name>
<organism>
    <name type="scientific">Streptococcus pyogenes serotype M18 (strain MGAS8232)</name>
    <dbReference type="NCBI Taxonomy" id="186103"/>
    <lineage>
        <taxon>Bacteria</taxon>
        <taxon>Bacillati</taxon>
        <taxon>Bacillota</taxon>
        <taxon>Bacilli</taxon>
        <taxon>Lactobacillales</taxon>
        <taxon>Streptococcaceae</taxon>
        <taxon>Streptococcus</taxon>
    </lineage>
</organism>
<feature type="chain" id="PRO_0000107817" description="Putative gluconeogenesis factor">
    <location>
        <begin position="1"/>
        <end position="325"/>
    </location>
</feature>
<reference key="1">
    <citation type="journal article" date="2002" name="Proc. Natl. Acad. Sci. U.S.A.">
        <title>Genome sequence and comparative microarray analysis of serotype M18 group A Streptococcus strains associated with acute rheumatic fever outbreaks.</title>
        <authorList>
            <person name="Smoot J.C."/>
            <person name="Barbian K.D."/>
            <person name="Van Gompel J.J."/>
            <person name="Smoot L.M."/>
            <person name="Chaussee M.S."/>
            <person name="Sylva G.L."/>
            <person name="Sturdevant D.E."/>
            <person name="Ricklefs S.M."/>
            <person name="Porcella S.F."/>
            <person name="Parkins L.D."/>
            <person name="Beres S.B."/>
            <person name="Campbell D.S."/>
            <person name="Smith T.M."/>
            <person name="Zhang Q."/>
            <person name="Kapur V."/>
            <person name="Daly J.A."/>
            <person name="Veasy L.G."/>
            <person name="Musser J.M."/>
        </authorList>
    </citation>
    <scope>NUCLEOTIDE SEQUENCE [LARGE SCALE GENOMIC DNA]</scope>
    <source>
        <strain>MGAS8232</strain>
    </source>
</reference>
<proteinExistence type="inferred from homology"/>
<evidence type="ECO:0000255" key="1">
    <source>
        <dbReference type="HAMAP-Rule" id="MF_00973"/>
    </source>
</evidence>
<protein>
    <recommendedName>
        <fullName evidence="1">Putative gluconeogenesis factor</fullName>
    </recommendedName>
</protein>